<name>MENC_YERPS</name>
<proteinExistence type="inferred from homology"/>
<accession>Q669D0</accession>
<organism>
    <name type="scientific">Yersinia pseudotuberculosis serotype I (strain IP32953)</name>
    <dbReference type="NCBI Taxonomy" id="273123"/>
    <lineage>
        <taxon>Bacteria</taxon>
        <taxon>Pseudomonadati</taxon>
        <taxon>Pseudomonadota</taxon>
        <taxon>Gammaproteobacteria</taxon>
        <taxon>Enterobacterales</taxon>
        <taxon>Yersiniaceae</taxon>
        <taxon>Yersinia</taxon>
    </lineage>
</organism>
<protein>
    <recommendedName>
        <fullName evidence="1">o-succinylbenzoate synthase</fullName>
        <shortName evidence="1">OSB synthase</shortName>
        <shortName evidence="1">OSBS</shortName>
        <ecNumber evidence="1">4.2.1.113</ecNumber>
    </recommendedName>
    <alternativeName>
        <fullName evidence="1">4-(2'-carboxyphenyl)-4-oxybutyric acid synthase</fullName>
    </alternativeName>
    <alternativeName>
        <fullName evidence="1">o-succinylbenzoic acid synthase</fullName>
    </alternativeName>
</protein>
<comment type="function">
    <text evidence="1">Converts 2-succinyl-6-hydroxy-2,4-cyclohexadiene-1-carboxylate (SHCHC) to 2-succinylbenzoate (OSB).</text>
</comment>
<comment type="catalytic activity">
    <reaction evidence="1">
        <text>(1R,6R)-6-hydroxy-2-succinyl-cyclohexa-2,4-diene-1-carboxylate = 2-succinylbenzoate + H2O</text>
        <dbReference type="Rhea" id="RHEA:10196"/>
        <dbReference type="ChEBI" id="CHEBI:15377"/>
        <dbReference type="ChEBI" id="CHEBI:18325"/>
        <dbReference type="ChEBI" id="CHEBI:58689"/>
        <dbReference type="EC" id="4.2.1.113"/>
    </reaction>
</comment>
<comment type="cofactor">
    <cofactor evidence="1">
        <name>a divalent metal cation</name>
        <dbReference type="ChEBI" id="CHEBI:60240"/>
    </cofactor>
</comment>
<comment type="pathway">
    <text evidence="1">Quinol/quinone metabolism; 1,4-dihydroxy-2-naphthoate biosynthesis; 1,4-dihydroxy-2-naphthoate from chorismate: step 4/7.</text>
</comment>
<comment type="pathway">
    <text evidence="1">Quinol/quinone metabolism; menaquinone biosynthesis.</text>
</comment>
<comment type="similarity">
    <text evidence="1">Belongs to the mandelate racemase/muconate lactonizing enzyme family. MenC type 1 subfamily.</text>
</comment>
<feature type="chain" id="PRO_1000013820" description="o-succinylbenzoate synthase">
    <location>
        <begin position="1"/>
        <end position="323"/>
    </location>
</feature>
<feature type="active site" description="Proton donor" evidence="1">
    <location>
        <position position="134"/>
    </location>
</feature>
<feature type="active site" description="Proton acceptor" evidence="1">
    <location>
        <position position="236"/>
    </location>
</feature>
<feature type="binding site" evidence="1">
    <location>
        <position position="162"/>
    </location>
    <ligand>
        <name>Mg(2+)</name>
        <dbReference type="ChEBI" id="CHEBI:18420"/>
    </ligand>
</feature>
<feature type="binding site" evidence="1">
    <location>
        <position position="191"/>
    </location>
    <ligand>
        <name>Mg(2+)</name>
        <dbReference type="ChEBI" id="CHEBI:18420"/>
    </ligand>
</feature>
<feature type="binding site" evidence="1">
    <location>
        <position position="214"/>
    </location>
    <ligand>
        <name>Mg(2+)</name>
        <dbReference type="ChEBI" id="CHEBI:18420"/>
    </ligand>
</feature>
<dbReference type="EC" id="4.2.1.113" evidence="1"/>
<dbReference type="EMBL" id="BX936398">
    <property type="protein sequence ID" value="CAH21795.1"/>
    <property type="molecule type" value="Genomic_DNA"/>
</dbReference>
<dbReference type="RefSeq" id="WP_011192654.1">
    <property type="nucleotide sequence ID" value="NC_006155.1"/>
</dbReference>
<dbReference type="SMR" id="Q669D0"/>
<dbReference type="KEGG" id="ypo:BZ17_4081"/>
<dbReference type="KEGG" id="yps:YPTB2557"/>
<dbReference type="PATRIC" id="fig|273123.14.peg.4291"/>
<dbReference type="UniPathway" id="UPA00079"/>
<dbReference type="UniPathway" id="UPA01057">
    <property type="reaction ID" value="UER00165"/>
</dbReference>
<dbReference type="Proteomes" id="UP000001011">
    <property type="component" value="Chromosome"/>
</dbReference>
<dbReference type="GO" id="GO:0000287">
    <property type="term" value="F:magnesium ion binding"/>
    <property type="evidence" value="ECO:0007669"/>
    <property type="project" value="UniProtKB-UniRule"/>
</dbReference>
<dbReference type="GO" id="GO:0043748">
    <property type="term" value="F:O-succinylbenzoate synthase activity"/>
    <property type="evidence" value="ECO:0007669"/>
    <property type="project" value="UniProtKB-EC"/>
</dbReference>
<dbReference type="GO" id="GO:0009234">
    <property type="term" value="P:menaquinone biosynthetic process"/>
    <property type="evidence" value="ECO:0007669"/>
    <property type="project" value="UniProtKB-UniRule"/>
</dbReference>
<dbReference type="CDD" id="cd03320">
    <property type="entry name" value="OSBS"/>
    <property type="match status" value="1"/>
</dbReference>
<dbReference type="Gene3D" id="3.20.20.120">
    <property type="entry name" value="Enolase-like C-terminal domain"/>
    <property type="match status" value="1"/>
</dbReference>
<dbReference type="Gene3D" id="3.30.390.10">
    <property type="entry name" value="Enolase-like, N-terminal domain"/>
    <property type="match status" value="1"/>
</dbReference>
<dbReference type="HAMAP" id="MF_00470">
    <property type="entry name" value="MenC_1"/>
    <property type="match status" value="1"/>
</dbReference>
<dbReference type="InterPro" id="IPR036849">
    <property type="entry name" value="Enolase-like_C_sf"/>
</dbReference>
<dbReference type="InterPro" id="IPR029017">
    <property type="entry name" value="Enolase-like_N"/>
</dbReference>
<dbReference type="InterPro" id="IPR029065">
    <property type="entry name" value="Enolase_C-like"/>
</dbReference>
<dbReference type="InterPro" id="IPR013342">
    <property type="entry name" value="Mandelate_racemase_C"/>
</dbReference>
<dbReference type="InterPro" id="IPR010196">
    <property type="entry name" value="OSB_synthase_MenC1"/>
</dbReference>
<dbReference type="InterPro" id="IPR041338">
    <property type="entry name" value="OSBS_N"/>
</dbReference>
<dbReference type="NCBIfam" id="TIGR01927">
    <property type="entry name" value="menC_gam_Gplu"/>
    <property type="match status" value="1"/>
</dbReference>
<dbReference type="NCBIfam" id="NF003473">
    <property type="entry name" value="PRK05105.1"/>
    <property type="match status" value="1"/>
</dbReference>
<dbReference type="PANTHER" id="PTHR48073:SF2">
    <property type="entry name" value="O-SUCCINYLBENZOATE SYNTHASE"/>
    <property type="match status" value="1"/>
</dbReference>
<dbReference type="PANTHER" id="PTHR48073">
    <property type="entry name" value="O-SUCCINYLBENZOATE SYNTHASE-RELATED"/>
    <property type="match status" value="1"/>
</dbReference>
<dbReference type="Pfam" id="PF21508">
    <property type="entry name" value="MenC_N"/>
    <property type="match status" value="1"/>
</dbReference>
<dbReference type="Pfam" id="PF13378">
    <property type="entry name" value="MR_MLE_C"/>
    <property type="match status" value="1"/>
</dbReference>
<dbReference type="SFLD" id="SFLDG00180">
    <property type="entry name" value="muconate_cycloisomerase"/>
    <property type="match status" value="1"/>
</dbReference>
<dbReference type="SFLD" id="SFLDF00009">
    <property type="entry name" value="o-succinylbenzoate_synthase"/>
    <property type="match status" value="1"/>
</dbReference>
<dbReference type="SMART" id="SM00922">
    <property type="entry name" value="MR_MLE"/>
    <property type="match status" value="1"/>
</dbReference>
<dbReference type="SUPFAM" id="SSF51604">
    <property type="entry name" value="Enolase C-terminal domain-like"/>
    <property type="match status" value="1"/>
</dbReference>
<dbReference type="SUPFAM" id="SSF54826">
    <property type="entry name" value="Enolase N-terminal domain-like"/>
    <property type="match status" value="1"/>
</dbReference>
<reference key="1">
    <citation type="journal article" date="2004" name="Proc. Natl. Acad. Sci. U.S.A.">
        <title>Insights into the evolution of Yersinia pestis through whole-genome comparison with Yersinia pseudotuberculosis.</title>
        <authorList>
            <person name="Chain P.S.G."/>
            <person name="Carniel E."/>
            <person name="Larimer F.W."/>
            <person name="Lamerdin J."/>
            <person name="Stoutland P.O."/>
            <person name="Regala W.M."/>
            <person name="Georgescu A.M."/>
            <person name="Vergez L.M."/>
            <person name="Land M.L."/>
            <person name="Motin V.L."/>
            <person name="Brubaker R.R."/>
            <person name="Fowler J."/>
            <person name="Hinnebusch J."/>
            <person name="Marceau M."/>
            <person name="Medigue C."/>
            <person name="Simonet M."/>
            <person name="Chenal-Francisque V."/>
            <person name="Souza B."/>
            <person name="Dacheux D."/>
            <person name="Elliott J.M."/>
            <person name="Derbise A."/>
            <person name="Hauser L.J."/>
            <person name="Garcia E."/>
        </authorList>
    </citation>
    <scope>NUCLEOTIDE SEQUENCE [LARGE SCALE GENOMIC DNA]</scope>
    <source>
        <strain>IP32953</strain>
    </source>
</reference>
<gene>
    <name evidence="1" type="primary">menC</name>
    <name type="ordered locus">YPTB2557</name>
</gene>
<sequence>MRTATLYRYSVPMEAGVILRHQRLKSRDGLLVKLQQGELSGWGEIAPLPEFSQETLDQAQVAAECWLQHWVSGVESDDSVLPSVAFGLSCAQAELKQTLPLSADYRKASLCTGDPDELFAVLQALPGEKVAKVKVGLYEAVRDGMIVNVLLEALPDLTLRLDANRSWSRAKADGFAKYVNPALRSRIAFLEEPCKTRAESREFAQDTGIAIAWDESVREADFQVEAEPGVAAIVIKPTLVGSLARCQQLVQQAHQAGLVAVISSSIESSLGLTQLARLAAWLTPATVPGLDTLDLMQAQVVRPWPDSPLPLITTEQLGVVWHR</sequence>
<keyword id="KW-0456">Lyase</keyword>
<keyword id="KW-0460">Magnesium</keyword>
<keyword id="KW-0474">Menaquinone biosynthesis</keyword>
<keyword id="KW-0479">Metal-binding</keyword>
<evidence type="ECO:0000255" key="1">
    <source>
        <dbReference type="HAMAP-Rule" id="MF_00470"/>
    </source>
</evidence>